<accession>Q7LDI9</accession>
<accession>Q9UKH5</accession>
<accession>Q9Y6I1</accession>
<accession>Q9YNA6</accession>
<accession>Q9YNB0</accession>
<evidence type="ECO:0000250" key="1"/>
<evidence type="ECO:0000255" key="2"/>
<evidence type="ECO:0000255" key="3">
    <source>
        <dbReference type="PROSITE-ProRule" id="PRU00047"/>
    </source>
</evidence>
<evidence type="ECO:0000256" key="4">
    <source>
        <dbReference type="SAM" id="MobiDB-lite"/>
    </source>
</evidence>
<evidence type="ECO:0000305" key="5"/>
<comment type="function">
    <text>The products of the Gag polyproteins of infectious retroviruses perform highly complex orchestrated tasks during the assembly, budding, maturation, and infection stages of the viral replication cycle. During viral assembly, the proteins form membrane associations and self-associations that ultimately result in budding of an immature virion from the infected cell. Gag precursors also function during viral assembly to selectively bind and package two plus strands of genomic RNA. Endogenous Gag proteins may have kept, lost or modified their original function during evolution.</text>
</comment>
<comment type="subcellular location">
    <subcellularLocation>
        <location>Cell membrane</location>
        <topology>Lipid-anchor</topology>
    </subcellularLocation>
    <text evidence="1">Cytoplasmic membrane (in a transfection system).</text>
</comment>
<comment type="alternative products">
    <event type="ribosomal frameshifting"/>
    <isoform>
        <id>Q7LDI9-1</id>
        <name>1</name>
        <sequence type="displayed"/>
    </isoform>
    <text>This protein is synthesized as a Gag polypeptide and as a Gag-Pro-Pol polyprotein. The later is the precursor of the Pro and Pol proteins. It is thought, by similarity with type-B retroviruses, to be generated by -1 frameshifts occurring at the Gag-Pro and Pro-Pol genes boundaries.</text>
</comment>
<comment type="domain">
    <text>HERV-K Gag polyprotein contains regions homologous to the matrix (MA), capsid (CA) and nucleocapsid (NC) proteins from infectious retroviruses. Evidence suggests that HERV-K(HML-2) Gag polyprotein can be cleaved into mature MA, CA and NC under certain circumstances. However, the exact boundaries as well as the size of processed Gag proteins have not been precisely determined yet.</text>
</comment>
<comment type="PTM">
    <text evidence="1">Myristoylation is essential for retroviral assembly. Alteration of the glycine residue leads to a block in the budding of particles and an accumulation of Gag inside the cell (By similarity).</text>
</comment>
<comment type="PTM">
    <text evidence="5">Specific enzymatic cleavages may yield mature proteins.</text>
</comment>
<comment type="similarity">
    <text evidence="5">Belongs to the beta type-B retroviral Gag protein family. HERV class-II K(HML-2) gag subfamily.</text>
</comment>
<comment type="caution">
    <text evidence="5">Gag proteins of ERVK-6 tandem proviruses have been initially reported as being identical (AAF88165 and AAD21095). However, the same Gag proteins sequences, when translated from the human genome draft (AC072054), show conflicts with respect to each other.</text>
</comment>
<comment type="sequence caution" evidence="5">
    <conflict type="frameshift">
        <sequence resource="EMBL-CDS" id="AAD51797"/>
    </conflict>
    <text>Occurs within the codons for the last amino acids in the Gag and Pro open reading frames.</text>
</comment>
<comment type="sequence caution" evidence="5">
    <conflict type="erroneous termination">
        <sequence resource="EMBL" id="AC072054"/>
    </conflict>
    <text>Truncated C-terminus. Provirus 41574.</text>
</comment>
<comment type="sequence caution" evidence="5">
    <conflict type="erroneous termination">
        <sequence resource="EMBL" id="AC072054"/>
    </conflict>
    <text>Truncated C-terminus. Provirus 41575.</text>
</comment>
<proteinExistence type="evidence at protein level"/>
<organism>
    <name type="scientific">Homo sapiens</name>
    <name type="common">Human</name>
    <dbReference type="NCBI Taxonomy" id="9606"/>
    <lineage>
        <taxon>Eukaryota</taxon>
        <taxon>Metazoa</taxon>
        <taxon>Chordata</taxon>
        <taxon>Craniata</taxon>
        <taxon>Vertebrata</taxon>
        <taxon>Euteleostomi</taxon>
        <taxon>Mammalia</taxon>
        <taxon>Eutheria</taxon>
        <taxon>Euarchontoglires</taxon>
        <taxon>Primates</taxon>
        <taxon>Haplorrhini</taxon>
        <taxon>Catarrhini</taxon>
        <taxon>Hominidae</taxon>
        <taxon>Homo</taxon>
    </lineage>
</organism>
<name>GAK6_HUMAN</name>
<keyword id="KW-1003">Cell membrane</keyword>
<keyword id="KW-0895">ERV</keyword>
<keyword id="KW-0449">Lipoprotein</keyword>
<keyword id="KW-0472">Membrane</keyword>
<keyword id="KW-0479">Metal-binding</keyword>
<keyword id="KW-0519">Myristate</keyword>
<keyword id="KW-1185">Reference proteome</keyword>
<keyword id="KW-0677">Repeat</keyword>
<keyword id="KW-0688">Ribosomal frameshifting</keyword>
<keyword id="KW-0814">Transposable element</keyword>
<keyword id="KW-0862">Zinc</keyword>
<keyword id="KW-0863">Zinc-finger</keyword>
<feature type="initiator methionine" description="Removed" evidence="2">
    <location>
        <position position="1"/>
    </location>
</feature>
<feature type="chain" id="PRO_0000186745" description="Endogenous retrovirus group K member 6 Gag polyprotein">
    <location>
        <begin position="2"/>
        <end position="666"/>
    </location>
</feature>
<feature type="zinc finger region" description="CCHC-type 1" evidence="3">
    <location>
        <begin position="544"/>
        <end position="561"/>
    </location>
</feature>
<feature type="zinc finger region" description="CCHC-type 2" evidence="3">
    <location>
        <begin position="580"/>
        <end position="597"/>
    </location>
</feature>
<feature type="region of interest" description="Disordered" evidence="4">
    <location>
        <begin position="165"/>
        <end position="264"/>
    </location>
</feature>
<feature type="region of interest" description="Disordered" evidence="4">
    <location>
        <begin position="598"/>
        <end position="642"/>
    </location>
</feature>
<feature type="compositionally biased region" description="Pro residues" evidence="4">
    <location>
        <begin position="232"/>
        <end position="247"/>
    </location>
</feature>
<feature type="compositionally biased region" description="Polar residues" evidence="4">
    <location>
        <begin position="604"/>
        <end position="622"/>
    </location>
</feature>
<feature type="compositionally biased region" description="Low complexity" evidence="4">
    <location>
        <begin position="624"/>
        <end position="640"/>
    </location>
</feature>
<feature type="lipid moiety-binding region" description="N-myristoyl glycine" evidence="2">
    <location>
        <position position="2"/>
    </location>
</feature>
<feature type="sequence conflict" description="In Ref. 5; in both proviruses." evidence="5" ref="5">
    <original>G</original>
    <variation>R</variation>
    <location>
        <position position="26"/>
    </location>
</feature>
<feature type="sequence conflict" description="In Ref. 5; in both proviruses." evidence="5" ref="5">
    <original>P</original>
    <variation>S</variation>
    <location>
        <position position="223"/>
    </location>
</feature>
<feature type="sequence conflict" description="In Ref. 5; in provirus 41574." evidence="5" ref="5">
    <original>V</original>
    <variation>I</variation>
    <location>
        <position position="419"/>
    </location>
</feature>
<feature type="sequence conflict" description="In Ref. 3; CAA76878." evidence="5" ref="3">
    <original>H</original>
    <variation>Y</variation>
    <location>
        <position position="521"/>
    </location>
</feature>
<protein>
    <recommendedName>
        <fullName>Endogenous retrovirus group K member 6 Gag polyprotein</fullName>
    </recommendedName>
    <alternativeName>
        <fullName>HERV-K(C7) Gag protein</fullName>
    </alternativeName>
    <alternativeName>
        <fullName>HERV-K(HML-2.HOM) Gag protein</fullName>
    </alternativeName>
    <alternativeName>
        <fullName>HERV-K108 Gag protein</fullName>
    </alternativeName>
    <alternativeName>
        <fullName>HERV-K_7p22.1 provirus ancestral Gag polyprotein</fullName>
        <shortName>Gag polyprotein</shortName>
    </alternativeName>
</protein>
<sequence>MGQTKSKIKSKYASYLSFIKILLKRGGVKVSTKNLIKLFQIIEQFCPWFPEQGTLDLKDWKRIGKELKQAGRKGNIIPLTVWNDWAIIKAALEPFQTEEDSVSVSDAPGSCIIDCNENTRKKSQKETEGLHCEYVAEPVMAQSTQNVDYNQLQEVIYPETLKLEGKGPELVGPSESKPRGTSPLPAGQVPVTLQPQKQVKENKTQPPVAYQYWPPAELQYRPPPESQYGYPGMPPAPQGRAPYPQPPTRRLNPTAPPSRQGSKLHEIIDKSRKEGDTEAWQFPVTLEPMPPGEGAQEGEPPTVEARYKSFSIKKLKDMKEGVKQYGPNSPYMRTLLDSIAHGHRLIPYDWEILAKSSLSPSQFLQFKTWWIDGVQEQVRRNRAANPPVNIDADQLLGIGQNWSTISQQALMQNEAIEQVRAICLRAWEKIQDPGSTCPSFNTVRQGSKEPYPDFVARLQDVAQKSIADEKARKVIVELMAYENANPECQSAIKPLKGKVPAGSDVISEYVKACDGIGGAMHKAMLMAQAITGVVLGGQVRTFGRKCYNCGQIGHLKKNCPVLNKQNITIQATTTGREPPDLCPRCKKGKHWASQCRSKFDKNGQPLSGNEQRGQPQAPQQTGAFPIQPFVPQGFQGQQPPLSQVFQGISQLPQYNNCPPPQAAVQQ</sequence>
<gene>
    <name type="primary">ERVK-6</name>
    <name type="synonym">ERVK6</name>
</gene>
<reference key="1">
    <citation type="journal article" date="1999" name="Curr. Biol.">
        <title>Many human endogenous retrovirus K (HERV-K) proviruses are unique to humans.</title>
        <authorList>
            <person name="Barbulescu M."/>
            <person name="Turner G."/>
            <person name="Seaman M.I."/>
            <person name="Deinard A.S."/>
            <person name="Kidd K.K."/>
            <person name="Lenz J."/>
        </authorList>
    </citation>
    <scope>NUCLEOTIDE SEQUENCE [GENOMIC DNA]</scope>
</reference>
<reference key="2">
    <citation type="journal article" date="1999" name="Nat. Genet.">
        <title>An almost-intact human endogenous retrovirus K on human chromosome 7.</title>
        <authorList>
            <person name="Mayer J."/>
            <person name="Sauter M."/>
            <person name="Racz A."/>
            <person name="Scherer D."/>
            <person name="Mueller-Lantzsch N."/>
            <person name="Meese E.U."/>
        </authorList>
    </citation>
    <scope>NUCLEOTIDE SEQUENCE [GENOMIC DNA]</scope>
</reference>
<reference key="3">
    <citation type="journal article" date="2001" name="Genomics">
        <title>Genomic organization of the human endogenous retrovirus HERV-K(HML-2.HOM) (ERVK6) on chromosome 7.</title>
        <authorList>
            <person name="Reus K."/>
            <person name="Mayer J."/>
            <person name="Sauter M."/>
            <person name="Scherer D."/>
            <person name="Mueller-Lantzsch N."/>
            <person name="Meese E.U."/>
        </authorList>
    </citation>
    <scope>NUCLEOTIDE SEQUENCE [GENOMIC DNA]</scope>
</reference>
<reference key="4">
    <citation type="journal article" date="1999" name="J. Virol.">
        <title>Genome wide screening, cloning, chromosomal assignment and expression of full-length human endogenous retrovirus type K (HERV-K).</title>
        <authorList>
            <person name="Toenjes R.R."/>
            <person name="Czauderna F."/>
            <person name="Kurth R."/>
        </authorList>
    </citation>
    <scope>NUCLEOTIDE SEQUENCE [GENOMIC DNA]</scope>
</reference>
<reference key="5">
    <citation type="journal article" date="2003" name="Nature">
        <title>The DNA sequence of human chromosome 7.</title>
        <authorList>
            <person name="Hillier L.W."/>
            <person name="Fulton R.S."/>
            <person name="Fulton L.A."/>
            <person name="Graves T.A."/>
            <person name="Pepin K.H."/>
            <person name="Wagner-McPherson C."/>
            <person name="Layman D."/>
            <person name="Maas J."/>
            <person name="Jaeger S."/>
            <person name="Walker R."/>
            <person name="Wylie K."/>
            <person name="Sekhon M."/>
            <person name="Becker M.C."/>
            <person name="O'Laughlin M.D."/>
            <person name="Schaller M.E."/>
            <person name="Fewell G.A."/>
            <person name="Delehaunty K.D."/>
            <person name="Miner T.L."/>
            <person name="Nash W.E."/>
            <person name="Cordes M."/>
            <person name="Du H."/>
            <person name="Sun H."/>
            <person name="Edwards J."/>
            <person name="Bradshaw-Cordum H."/>
            <person name="Ali J."/>
            <person name="Andrews S."/>
            <person name="Isak A."/>
            <person name="Vanbrunt A."/>
            <person name="Nguyen C."/>
            <person name="Du F."/>
            <person name="Lamar B."/>
            <person name="Courtney L."/>
            <person name="Kalicki J."/>
            <person name="Ozersky P."/>
            <person name="Bielicki L."/>
            <person name="Scott K."/>
            <person name="Holmes A."/>
            <person name="Harkins R."/>
            <person name="Harris A."/>
            <person name="Strong C.M."/>
            <person name="Hou S."/>
            <person name="Tomlinson C."/>
            <person name="Dauphin-Kohlberg S."/>
            <person name="Kozlowicz-Reilly A."/>
            <person name="Leonard S."/>
            <person name="Rohlfing T."/>
            <person name="Rock S.M."/>
            <person name="Tin-Wollam A.-M."/>
            <person name="Abbott A."/>
            <person name="Minx P."/>
            <person name="Maupin R."/>
            <person name="Strowmatt C."/>
            <person name="Latreille P."/>
            <person name="Miller N."/>
            <person name="Johnson D."/>
            <person name="Murray J."/>
            <person name="Woessner J.P."/>
            <person name="Wendl M.C."/>
            <person name="Yang S.-P."/>
            <person name="Schultz B.R."/>
            <person name="Wallis J.W."/>
            <person name="Spieth J."/>
            <person name="Bieri T.A."/>
            <person name="Nelson J.O."/>
            <person name="Berkowicz N."/>
            <person name="Wohldmann P.E."/>
            <person name="Cook L.L."/>
            <person name="Hickenbotham M.T."/>
            <person name="Eldred J."/>
            <person name="Williams D."/>
            <person name="Bedell J.A."/>
            <person name="Mardis E.R."/>
            <person name="Clifton S.W."/>
            <person name="Chissoe S.L."/>
            <person name="Marra M.A."/>
            <person name="Raymond C."/>
            <person name="Haugen E."/>
            <person name="Gillett W."/>
            <person name="Zhou Y."/>
            <person name="James R."/>
            <person name="Phelps K."/>
            <person name="Iadanoto S."/>
            <person name="Bubb K."/>
            <person name="Simms E."/>
            <person name="Levy R."/>
            <person name="Clendenning J."/>
            <person name="Kaul R."/>
            <person name="Kent W.J."/>
            <person name="Furey T.S."/>
            <person name="Baertsch R.A."/>
            <person name="Brent M.R."/>
            <person name="Keibler E."/>
            <person name="Flicek P."/>
            <person name="Bork P."/>
            <person name="Suyama M."/>
            <person name="Bailey J.A."/>
            <person name="Portnoy M.E."/>
            <person name="Torrents D."/>
            <person name="Chinwalla A.T."/>
            <person name="Gish W.R."/>
            <person name="Eddy S.R."/>
            <person name="McPherson J.D."/>
            <person name="Olson M.V."/>
            <person name="Eichler E.E."/>
            <person name="Green E.D."/>
            <person name="Waterston R.H."/>
            <person name="Wilson R.K."/>
        </authorList>
    </citation>
    <scope>NUCLEOTIDE SEQUENCE [LARGE SCALE GENOMIC DNA]</scope>
</reference>
<reference key="6">
    <citation type="journal article" date="1995" name="J. Virol.">
        <title>Human endogenous retrovirus K10: expression of Gag protein and detection of antibodies in patients with seminomas.</title>
        <authorList>
            <person name="Sauter M."/>
            <person name="Schommer S."/>
            <person name="Kremmer E."/>
            <person name="Remberger K."/>
            <person name="Doelken G."/>
            <person name="Lemm I."/>
            <person name="Buck M."/>
            <person name="Best B."/>
            <person name="Neumann-Haefelin D."/>
            <person name="Mueller-Lantzsch N."/>
        </authorList>
    </citation>
    <scope>CHARACTERIZATION</scope>
</reference>
<dbReference type="EMBL" id="AF164614">
    <property type="protein sequence ID" value="AAD51797.1"/>
    <property type="status" value="ALT_FRAME"/>
    <property type="molecule type" value="Genomic_DNA"/>
</dbReference>
<dbReference type="EMBL" id="AF074086">
    <property type="protein sequence ID" value="AAF88165.1"/>
    <property type="molecule type" value="Genomic_DNA"/>
</dbReference>
<dbReference type="EMBL" id="AF074086">
    <property type="protein sequence ID" value="AAD21095.2"/>
    <property type="molecule type" value="Genomic_DNA"/>
</dbReference>
<dbReference type="EMBL" id="Y17832">
    <property type="protein sequence ID" value="CAA76878.1"/>
    <property type="molecule type" value="Genomic_DNA"/>
</dbReference>
<dbReference type="EMBL" id="Y17834">
    <property type="protein sequence ID" value="CAA76884.1"/>
    <property type="molecule type" value="Genomic_DNA"/>
</dbReference>
<dbReference type="EMBL" id="AC072054">
    <property type="status" value="NOT_ANNOTATED_CDS"/>
    <property type="molecule type" value="Genomic_DNA"/>
</dbReference>
<dbReference type="SMR" id="Q7LDI9"/>
<dbReference type="IntAct" id="Q7LDI9">
    <property type="interactions" value="1"/>
</dbReference>
<dbReference type="BioMuta" id="HGNC:13915"/>
<dbReference type="DMDM" id="50400385"/>
<dbReference type="jPOST" id="Q7LDI9"/>
<dbReference type="MassIVE" id="Q7LDI9"/>
<dbReference type="PeptideAtlas" id="Q7LDI9"/>
<dbReference type="ProteomicsDB" id="68855">
    <molecule id="Q7LDI9-1"/>
</dbReference>
<dbReference type="AGR" id="HGNC:13915"/>
<dbReference type="GeneCards" id="ERVK-6"/>
<dbReference type="HGNC" id="HGNC:13915">
    <property type="gene designation" value="ERVK-6"/>
</dbReference>
<dbReference type="MIM" id="605626">
    <property type="type" value="gene"/>
</dbReference>
<dbReference type="neXtProt" id="NX_Q7LDI9"/>
<dbReference type="PhylomeDB" id="Q7LDI9"/>
<dbReference type="PathwayCommons" id="Q7LDI9"/>
<dbReference type="Pharos" id="Q7LDI9">
    <property type="development level" value="Tdark"/>
</dbReference>
<dbReference type="Proteomes" id="UP000005640">
    <property type="component" value="Unplaced"/>
</dbReference>
<dbReference type="GO" id="GO:0005886">
    <property type="term" value="C:plasma membrane"/>
    <property type="evidence" value="ECO:0007669"/>
    <property type="project" value="UniProtKB-SubCell"/>
</dbReference>
<dbReference type="GO" id="GO:0003676">
    <property type="term" value="F:nucleic acid binding"/>
    <property type="evidence" value="ECO:0007669"/>
    <property type="project" value="InterPro"/>
</dbReference>
<dbReference type="GO" id="GO:0005198">
    <property type="term" value="F:structural molecule activity"/>
    <property type="evidence" value="ECO:0007669"/>
    <property type="project" value="InterPro"/>
</dbReference>
<dbReference type="GO" id="GO:0008270">
    <property type="term" value="F:zinc ion binding"/>
    <property type="evidence" value="ECO:0007669"/>
    <property type="project" value="UniProtKB-KW"/>
</dbReference>
<dbReference type="GO" id="GO:0075523">
    <property type="term" value="P:viral translational frameshifting"/>
    <property type="evidence" value="ECO:0007669"/>
    <property type="project" value="UniProtKB-KW"/>
</dbReference>
<dbReference type="Gene3D" id="1.10.1200.30">
    <property type="match status" value="1"/>
</dbReference>
<dbReference type="Gene3D" id="1.10.375.10">
    <property type="entry name" value="Human Immunodeficiency Virus Type 1 Capsid Protein"/>
    <property type="match status" value="1"/>
</dbReference>
<dbReference type="Gene3D" id="1.10.150.490">
    <property type="entry name" value="Retroviral GAG p10 protein"/>
    <property type="match status" value="1"/>
</dbReference>
<dbReference type="Gene3D" id="4.10.60.10">
    <property type="entry name" value="Zinc finger, CCHC-type"/>
    <property type="match status" value="1"/>
</dbReference>
<dbReference type="InterPro" id="IPR003322">
    <property type="entry name" value="B_retro_matrix"/>
</dbReference>
<dbReference type="InterPro" id="IPR038124">
    <property type="entry name" value="B_retro_matrix_sf"/>
</dbReference>
<dbReference type="InterPro" id="IPR045345">
    <property type="entry name" value="Gag_p24_C"/>
</dbReference>
<dbReference type="InterPro" id="IPR050195">
    <property type="entry name" value="Primate_lentivir_Gag_pol-like"/>
</dbReference>
<dbReference type="InterPro" id="IPR008916">
    <property type="entry name" value="Retrov_capsid_C"/>
</dbReference>
<dbReference type="InterPro" id="IPR008919">
    <property type="entry name" value="Retrov_capsid_N"/>
</dbReference>
<dbReference type="InterPro" id="IPR010999">
    <property type="entry name" value="Retrovr_matrix"/>
</dbReference>
<dbReference type="InterPro" id="IPR001878">
    <property type="entry name" value="Znf_CCHC"/>
</dbReference>
<dbReference type="InterPro" id="IPR036875">
    <property type="entry name" value="Znf_CCHC_sf"/>
</dbReference>
<dbReference type="PANTHER" id="PTHR40389">
    <property type="entry name" value="ENDOGENOUS RETROVIRUS GROUP K MEMBER 24 GAG POLYPROTEIN-RELATED"/>
    <property type="match status" value="1"/>
</dbReference>
<dbReference type="PANTHER" id="PTHR40389:SF2">
    <property type="entry name" value="ENDOGENOUS RETROVIRUS GROUP K MEMBER 24 GAG POLYPROTEIN-RELATED"/>
    <property type="match status" value="1"/>
</dbReference>
<dbReference type="Pfam" id="PF02337">
    <property type="entry name" value="Gag_p10"/>
    <property type="match status" value="1"/>
</dbReference>
<dbReference type="Pfam" id="PF00607">
    <property type="entry name" value="Gag_p24"/>
    <property type="match status" value="1"/>
</dbReference>
<dbReference type="Pfam" id="PF19317">
    <property type="entry name" value="Gag_p24_C"/>
    <property type="match status" value="1"/>
</dbReference>
<dbReference type="Pfam" id="PF00098">
    <property type="entry name" value="zf-CCHC"/>
    <property type="match status" value="1"/>
</dbReference>
<dbReference type="Pfam" id="PF14787">
    <property type="entry name" value="zf-CCHC_5"/>
    <property type="match status" value="1"/>
</dbReference>
<dbReference type="SMART" id="SM00343">
    <property type="entry name" value="ZnF_C2HC"/>
    <property type="match status" value="2"/>
</dbReference>
<dbReference type="SUPFAM" id="SSF47836">
    <property type="entry name" value="Retroviral matrix proteins"/>
    <property type="match status" value="1"/>
</dbReference>
<dbReference type="SUPFAM" id="SSF47353">
    <property type="entry name" value="Retrovirus capsid dimerization domain-like"/>
    <property type="match status" value="1"/>
</dbReference>
<dbReference type="SUPFAM" id="SSF47943">
    <property type="entry name" value="Retrovirus capsid protein, N-terminal core domain"/>
    <property type="match status" value="1"/>
</dbReference>
<dbReference type="SUPFAM" id="SSF57756">
    <property type="entry name" value="Retrovirus zinc finger-like domains"/>
    <property type="match status" value="2"/>
</dbReference>
<dbReference type="PROSITE" id="PS50158">
    <property type="entry name" value="ZF_CCHC"/>
    <property type="match status" value="1"/>
</dbReference>